<feature type="chain" id="PRO_1000200192" description="Protein RnfH">
    <location>
        <begin position="1"/>
        <end position="96"/>
    </location>
</feature>
<comment type="similarity">
    <text evidence="1">Belongs to the UPF0125 (RnfH) family.</text>
</comment>
<reference key="1">
    <citation type="journal article" date="2011" name="J. Bacteriol.">
        <title>Comparative genomics of 28 Salmonella enterica isolates: evidence for CRISPR-mediated adaptive sublineage evolution.</title>
        <authorList>
            <person name="Fricke W.F."/>
            <person name="Mammel M.K."/>
            <person name="McDermott P.F."/>
            <person name="Tartera C."/>
            <person name="White D.G."/>
            <person name="Leclerc J.E."/>
            <person name="Ravel J."/>
            <person name="Cebula T.A."/>
        </authorList>
    </citation>
    <scope>NUCLEOTIDE SEQUENCE [LARGE SCALE GENOMIC DNA]</scope>
    <source>
        <strain>CT_02021853</strain>
    </source>
</reference>
<dbReference type="EMBL" id="CP001144">
    <property type="protein sequence ID" value="ACH76213.1"/>
    <property type="molecule type" value="Genomic_DNA"/>
</dbReference>
<dbReference type="RefSeq" id="WP_001112990.1">
    <property type="nucleotide sequence ID" value="NC_011205.1"/>
</dbReference>
<dbReference type="SMR" id="B5FS17"/>
<dbReference type="KEGG" id="sed:SeD_A3013"/>
<dbReference type="HOGENOM" id="CLU_150721_1_0_6"/>
<dbReference type="Proteomes" id="UP000008322">
    <property type="component" value="Chromosome"/>
</dbReference>
<dbReference type="Gene3D" id="3.10.20.280">
    <property type="entry name" value="RnfH-like"/>
    <property type="match status" value="1"/>
</dbReference>
<dbReference type="HAMAP" id="MF_00460">
    <property type="entry name" value="UPF0125_RnfH"/>
    <property type="match status" value="1"/>
</dbReference>
<dbReference type="InterPro" id="IPR016155">
    <property type="entry name" value="Mopterin_synth/thiamin_S_b"/>
</dbReference>
<dbReference type="InterPro" id="IPR005346">
    <property type="entry name" value="RnfH"/>
</dbReference>
<dbReference type="InterPro" id="IPR037021">
    <property type="entry name" value="RnfH_sf"/>
</dbReference>
<dbReference type="NCBIfam" id="NF002490">
    <property type="entry name" value="PRK01777.1"/>
    <property type="match status" value="1"/>
</dbReference>
<dbReference type="PANTHER" id="PTHR37483">
    <property type="entry name" value="UPF0125 PROTEIN RATB"/>
    <property type="match status" value="1"/>
</dbReference>
<dbReference type="PANTHER" id="PTHR37483:SF1">
    <property type="entry name" value="UPF0125 PROTEIN RATB"/>
    <property type="match status" value="1"/>
</dbReference>
<dbReference type="Pfam" id="PF03658">
    <property type="entry name" value="Ub-RnfH"/>
    <property type="match status" value="1"/>
</dbReference>
<dbReference type="SUPFAM" id="SSF54285">
    <property type="entry name" value="MoaD/ThiS"/>
    <property type="match status" value="1"/>
</dbReference>
<gene>
    <name evidence="1" type="primary">rnfH</name>
    <name type="ordered locus">SeD_A3013</name>
</gene>
<protein>
    <recommendedName>
        <fullName evidence="1">Protein RnfH</fullName>
    </recommendedName>
</protein>
<sequence length="96" mass="10806">MPDKLVVEVAYALPEKQYLQRVTLEEGATVEEAIRASGLLELRTDIDLAKNKVGIYSRPVKLTDTVQDGDRVEIYRPLIADPKALRRQRAEKSAGR</sequence>
<organism>
    <name type="scientific">Salmonella dublin (strain CT_02021853)</name>
    <dbReference type="NCBI Taxonomy" id="439851"/>
    <lineage>
        <taxon>Bacteria</taxon>
        <taxon>Pseudomonadati</taxon>
        <taxon>Pseudomonadota</taxon>
        <taxon>Gammaproteobacteria</taxon>
        <taxon>Enterobacterales</taxon>
        <taxon>Enterobacteriaceae</taxon>
        <taxon>Salmonella</taxon>
    </lineage>
</organism>
<name>RNFH_SALDC</name>
<accession>B5FS17</accession>
<evidence type="ECO:0000255" key="1">
    <source>
        <dbReference type="HAMAP-Rule" id="MF_00460"/>
    </source>
</evidence>
<proteinExistence type="inferred from homology"/>